<proteinExistence type="inferred from homology"/>
<gene>
    <name evidence="1" type="primary">upp</name>
    <name type="ordered locus">blr7239</name>
</gene>
<keyword id="KW-0021">Allosteric enzyme</keyword>
<keyword id="KW-0328">Glycosyltransferase</keyword>
<keyword id="KW-0342">GTP-binding</keyword>
<keyword id="KW-0460">Magnesium</keyword>
<keyword id="KW-0547">Nucleotide-binding</keyword>
<keyword id="KW-1185">Reference proteome</keyword>
<keyword id="KW-0808">Transferase</keyword>
<comment type="function">
    <text evidence="1">Catalyzes the conversion of uracil and 5-phospho-alpha-D-ribose 1-diphosphate (PRPP) to UMP and diphosphate.</text>
</comment>
<comment type="catalytic activity">
    <reaction evidence="1">
        <text>UMP + diphosphate = 5-phospho-alpha-D-ribose 1-diphosphate + uracil</text>
        <dbReference type="Rhea" id="RHEA:13017"/>
        <dbReference type="ChEBI" id="CHEBI:17568"/>
        <dbReference type="ChEBI" id="CHEBI:33019"/>
        <dbReference type="ChEBI" id="CHEBI:57865"/>
        <dbReference type="ChEBI" id="CHEBI:58017"/>
        <dbReference type="EC" id="2.4.2.9"/>
    </reaction>
</comment>
<comment type="cofactor">
    <cofactor evidence="1">
        <name>Mg(2+)</name>
        <dbReference type="ChEBI" id="CHEBI:18420"/>
    </cofactor>
    <text evidence="1">Binds 1 Mg(2+) ion per subunit. The magnesium is bound as Mg-PRPP.</text>
</comment>
<comment type="activity regulation">
    <text evidence="1">Allosterically activated by GTP.</text>
</comment>
<comment type="pathway">
    <text evidence="1">Pyrimidine metabolism; UMP biosynthesis via salvage pathway; UMP from uracil: step 1/1.</text>
</comment>
<comment type="similarity">
    <text evidence="1">Belongs to the UPRTase family.</text>
</comment>
<dbReference type="EC" id="2.4.2.9" evidence="1"/>
<dbReference type="EMBL" id="BA000040">
    <property type="protein sequence ID" value="BAC52504.1"/>
    <property type="molecule type" value="Genomic_DNA"/>
</dbReference>
<dbReference type="RefSeq" id="NP_773879.1">
    <property type="nucleotide sequence ID" value="NC_004463.1"/>
</dbReference>
<dbReference type="RefSeq" id="WP_011089974.1">
    <property type="nucleotide sequence ID" value="NZ_CP011360.1"/>
</dbReference>
<dbReference type="SMR" id="Q89E48"/>
<dbReference type="FunCoup" id="Q89E48">
    <property type="interactions" value="685"/>
</dbReference>
<dbReference type="STRING" id="224911.AAV28_33855"/>
<dbReference type="EnsemblBacteria" id="BAC52504">
    <property type="protein sequence ID" value="BAC52504"/>
    <property type="gene ID" value="BAC52504"/>
</dbReference>
<dbReference type="GeneID" id="46494198"/>
<dbReference type="KEGG" id="bja:blr7239"/>
<dbReference type="PATRIC" id="fig|224911.44.peg.7309"/>
<dbReference type="eggNOG" id="COG0035">
    <property type="taxonomic scope" value="Bacteria"/>
</dbReference>
<dbReference type="HOGENOM" id="CLU_067096_2_2_5"/>
<dbReference type="InParanoid" id="Q89E48"/>
<dbReference type="OrthoDB" id="9781675at2"/>
<dbReference type="PhylomeDB" id="Q89E48"/>
<dbReference type="UniPathway" id="UPA00574">
    <property type="reaction ID" value="UER00636"/>
</dbReference>
<dbReference type="Proteomes" id="UP000002526">
    <property type="component" value="Chromosome"/>
</dbReference>
<dbReference type="GO" id="GO:0005525">
    <property type="term" value="F:GTP binding"/>
    <property type="evidence" value="ECO:0007669"/>
    <property type="project" value="UniProtKB-KW"/>
</dbReference>
<dbReference type="GO" id="GO:0000287">
    <property type="term" value="F:magnesium ion binding"/>
    <property type="evidence" value="ECO:0007669"/>
    <property type="project" value="UniProtKB-UniRule"/>
</dbReference>
<dbReference type="GO" id="GO:0004845">
    <property type="term" value="F:uracil phosphoribosyltransferase activity"/>
    <property type="evidence" value="ECO:0007669"/>
    <property type="project" value="UniProtKB-UniRule"/>
</dbReference>
<dbReference type="GO" id="GO:0044206">
    <property type="term" value="P:UMP salvage"/>
    <property type="evidence" value="ECO:0007669"/>
    <property type="project" value="UniProtKB-UniRule"/>
</dbReference>
<dbReference type="GO" id="GO:0006223">
    <property type="term" value="P:uracil salvage"/>
    <property type="evidence" value="ECO:0007669"/>
    <property type="project" value="InterPro"/>
</dbReference>
<dbReference type="CDD" id="cd06223">
    <property type="entry name" value="PRTases_typeI"/>
    <property type="match status" value="1"/>
</dbReference>
<dbReference type="FunFam" id="3.40.50.2020:FF:000003">
    <property type="entry name" value="Uracil phosphoribosyltransferase"/>
    <property type="match status" value="1"/>
</dbReference>
<dbReference type="Gene3D" id="3.40.50.2020">
    <property type="match status" value="1"/>
</dbReference>
<dbReference type="HAMAP" id="MF_01218_B">
    <property type="entry name" value="Upp_B"/>
    <property type="match status" value="1"/>
</dbReference>
<dbReference type="InterPro" id="IPR000836">
    <property type="entry name" value="PRibTrfase_dom"/>
</dbReference>
<dbReference type="InterPro" id="IPR029057">
    <property type="entry name" value="PRTase-like"/>
</dbReference>
<dbReference type="InterPro" id="IPR034332">
    <property type="entry name" value="Upp_B"/>
</dbReference>
<dbReference type="InterPro" id="IPR050054">
    <property type="entry name" value="UPRTase/APRTase"/>
</dbReference>
<dbReference type="InterPro" id="IPR005765">
    <property type="entry name" value="Ura_phspho_trans"/>
</dbReference>
<dbReference type="NCBIfam" id="NF001097">
    <property type="entry name" value="PRK00129.1"/>
    <property type="match status" value="1"/>
</dbReference>
<dbReference type="NCBIfam" id="TIGR01091">
    <property type="entry name" value="upp"/>
    <property type="match status" value="1"/>
</dbReference>
<dbReference type="PANTHER" id="PTHR32315">
    <property type="entry name" value="ADENINE PHOSPHORIBOSYLTRANSFERASE"/>
    <property type="match status" value="1"/>
</dbReference>
<dbReference type="PANTHER" id="PTHR32315:SF4">
    <property type="entry name" value="URACIL PHOSPHORIBOSYLTRANSFERASE, CHLOROPLASTIC"/>
    <property type="match status" value="1"/>
</dbReference>
<dbReference type="Pfam" id="PF14681">
    <property type="entry name" value="UPRTase"/>
    <property type="match status" value="1"/>
</dbReference>
<dbReference type="SUPFAM" id="SSF53271">
    <property type="entry name" value="PRTase-like"/>
    <property type="match status" value="1"/>
</dbReference>
<accession>Q89E48</accession>
<sequence length="209" mass="22727">MEGVTIVDHPLVQHKLTLVRDKSISTKSFRELIKEIGMLLCYEVTRDLPLADTVIETPLATMHSAKIAGKKLVFVPMLRAGTTFVDGMMDLVPTARVAHIGLYREPHSFAAVEYFFKSPSDLGERLAIVVTPVVATANTAVAAIDRLKERGAKDIRLACLIAAPEGLERLRGLHPDVPIWTAAVDEGLDENGFILPGLGDAGDRAYGTR</sequence>
<organism>
    <name type="scientific">Bradyrhizobium diazoefficiens (strain JCM 10833 / BCRC 13528 / IAM 13628 / NBRC 14792 / USDA 110)</name>
    <dbReference type="NCBI Taxonomy" id="224911"/>
    <lineage>
        <taxon>Bacteria</taxon>
        <taxon>Pseudomonadati</taxon>
        <taxon>Pseudomonadota</taxon>
        <taxon>Alphaproteobacteria</taxon>
        <taxon>Hyphomicrobiales</taxon>
        <taxon>Nitrobacteraceae</taxon>
        <taxon>Bradyrhizobium</taxon>
    </lineage>
</organism>
<evidence type="ECO:0000255" key="1">
    <source>
        <dbReference type="HAMAP-Rule" id="MF_01218"/>
    </source>
</evidence>
<name>UPP_BRADU</name>
<protein>
    <recommendedName>
        <fullName evidence="1">Uracil phosphoribosyltransferase</fullName>
        <ecNumber evidence="1">2.4.2.9</ecNumber>
    </recommendedName>
    <alternativeName>
        <fullName evidence="1">UMP pyrophosphorylase</fullName>
    </alternativeName>
    <alternativeName>
        <fullName evidence="1">UPRTase</fullName>
    </alternativeName>
</protein>
<feature type="chain" id="PRO_0000120805" description="Uracil phosphoribosyltransferase">
    <location>
        <begin position="1"/>
        <end position="209"/>
    </location>
</feature>
<feature type="binding site" evidence="1">
    <location>
        <position position="79"/>
    </location>
    <ligand>
        <name>5-phospho-alpha-D-ribose 1-diphosphate</name>
        <dbReference type="ChEBI" id="CHEBI:58017"/>
    </ligand>
</feature>
<feature type="binding site" evidence="1">
    <location>
        <position position="104"/>
    </location>
    <ligand>
        <name>5-phospho-alpha-D-ribose 1-diphosphate</name>
        <dbReference type="ChEBI" id="CHEBI:58017"/>
    </ligand>
</feature>
<feature type="binding site" evidence="1">
    <location>
        <begin position="131"/>
        <end position="139"/>
    </location>
    <ligand>
        <name>5-phospho-alpha-D-ribose 1-diphosphate</name>
        <dbReference type="ChEBI" id="CHEBI:58017"/>
    </ligand>
</feature>
<feature type="binding site" evidence="1">
    <location>
        <position position="194"/>
    </location>
    <ligand>
        <name>uracil</name>
        <dbReference type="ChEBI" id="CHEBI:17568"/>
    </ligand>
</feature>
<feature type="binding site" evidence="1">
    <location>
        <begin position="199"/>
        <end position="201"/>
    </location>
    <ligand>
        <name>uracil</name>
        <dbReference type="ChEBI" id="CHEBI:17568"/>
    </ligand>
</feature>
<feature type="binding site" evidence="1">
    <location>
        <position position="200"/>
    </location>
    <ligand>
        <name>5-phospho-alpha-D-ribose 1-diphosphate</name>
        <dbReference type="ChEBI" id="CHEBI:58017"/>
    </ligand>
</feature>
<reference key="1">
    <citation type="journal article" date="2002" name="DNA Res.">
        <title>Complete genomic sequence of nitrogen-fixing symbiotic bacterium Bradyrhizobium japonicum USDA110.</title>
        <authorList>
            <person name="Kaneko T."/>
            <person name="Nakamura Y."/>
            <person name="Sato S."/>
            <person name="Minamisawa K."/>
            <person name="Uchiumi T."/>
            <person name="Sasamoto S."/>
            <person name="Watanabe A."/>
            <person name="Idesawa K."/>
            <person name="Iriguchi M."/>
            <person name="Kawashima K."/>
            <person name="Kohara M."/>
            <person name="Matsumoto M."/>
            <person name="Shimpo S."/>
            <person name="Tsuruoka H."/>
            <person name="Wada T."/>
            <person name="Yamada M."/>
            <person name="Tabata S."/>
        </authorList>
    </citation>
    <scope>NUCLEOTIDE SEQUENCE [LARGE SCALE GENOMIC DNA]</scope>
    <source>
        <strain>JCM 10833 / BCRC 13528 / IAM 13628 / NBRC 14792 / USDA 110</strain>
    </source>
</reference>